<comment type="function">
    <text evidence="1">Converts cyanocobalamin (CN-B12) to adenosylcobalamin (AdoCbl), the inducer of the eut operon. Is not active on cobinamide nor other intermediates in the adenosylcobalamin synthetic pathway. Allows full induction of the eut operon.</text>
</comment>
<comment type="catalytic activity">
    <reaction evidence="1">
        <text>2 cob(II)alamin + reduced [electron-transfer flavoprotein] + 2 ATP + 2 H2O = 2 adenosylcob(III)alamin + oxidized [electron-transfer flavoprotein] + 2 phosphate + 2 diphosphate + 3 H(+)</text>
        <dbReference type="Rhea" id="RHEA:66828"/>
        <dbReference type="Rhea" id="RHEA-COMP:10685"/>
        <dbReference type="Rhea" id="RHEA-COMP:10686"/>
        <dbReference type="ChEBI" id="CHEBI:15377"/>
        <dbReference type="ChEBI" id="CHEBI:15378"/>
        <dbReference type="ChEBI" id="CHEBI:16304"/>
        <dbReference type="ChEBI" id="CHEBI:18408"/>
        <dbReference type="ChEBI" id="CHEBI:30616"/>
        <dbReference type="ChEBI" id="CHEBI:33019"/>
        <dbReference type="ChEBI" id="CHEBI:43474"/>
        <dbReference type="ChEBI" id="CHEBI:57692"/>
        <dbReference type="ChEBI" id="CHEBI:58307"/>
        <dbReference type="EC" id="2.5.1.154"/>
    </reaction>
</comment>
<comment type="catalytic activity">
    <reaction evidence="1">
        <text>2 cob(II)inamide + reduced [electron-transfer flavoprotein] + 2 ATP + 2 H2O = 2 adenosylcob(III)inamide + oxidized [electron-transfer flavoprotein] + 2 phosphate + 2 diphosphate + 3 H(+)</text>
        <dbReference type="Rhea" id="RHEA:66824"/>
        <dbReference type="Rhea" id="RHEA-COMP:10685"/>
        <dbReference type="Rhea" id="RHEA-COMP:10686"/>
        <dbReference type="ChEBI" id="CHEBI:2480"/>
        <dbReference type="ChEBI" id="CHEBI:15377"/>
        <dbReference type="ChEBI" id="CHEBI:15378"/>
        <dbReference type="ChEBI" id="CHEBI:30616"/>
        <dbReference type="ChEBI" id="CHEBI:33019"/>
        <dbReference type="ChEBI" id="CHEBI:43474"/>
        <dbReference type="ChEBI" id="CHEBI:57692"/>
        <dbReference type="ChEBI" id="CHEBI:58307"/>
        <dbReference type="ChEBI" id="CHEBI:141013"/>
        <dbReference type="EC" id="2.5.1.154"/>
    </reaction>
</comment>
<comment type="cofactor">
    <cofactor evidence="1">
        <name>a divalent metal cation</name>
        <dbReference type="ChEBI" id="CHEBI:60240"/>
    </cofactor>
    <text evidence="1">Binds 1 divalent metal cation ion per homodimer with both subunits providing Cys ligands; Fe(2+) gives most activity and is possibly the physiological cofactor.</text>
</comment>
<comment type="pathway">
    <text>Amine and polyamine degradation; ethanolamine degradation.</text>
</comment>
<comment type="subunit">
    <text evidence="1">Homodimer.</text>
</comment>
<comment type="subcellular location">
    <subcellularLocation>
        <location evidence="2">Bacterial microcompartment</location>
    </subcellularLocation>
</comment>
<comment type="similarity">
    <text evidence="2">Belongs to the Cob(I)alamin adenosyltransferase family. EutT subfamily.</text>
</comment>
<reference key="1">
    <citation type="journal article" date="2002" name="Proc. Natl. Acad. Sci. U.S.A.">
        <title>Extensive mosaic structure revealed by the complete genome sequence of uropathogenic Escherichia coli.</title>
        <authorList>
            <person name="Welch R.A."/>
            <person name="Burland V."/>
            <person name="Plunkett G. III"/>
            <person name="Redford P."/>
            <person name="Roesch P."/>
            <person name="Rasko D."/>
            <person name="Buckles E.L."/>
            <person name="Liou S.-R."/>
            <person name="Boutin A."/>
            <person name="Hackett J."/>
            <person name="Stroud D."/>
            <person name="Mayhew G.F."/>
            <person name="Rose D.J."/>
            <person name="Zhou S."/>
            <person name="Schwartz D.C."/>
            <person name="Perna N.T."/>
            <person name="Mobley H.L.T."/>
            <person name="Donnenberg M.S."/>
            <person name="Blattner F.R."/>
        </authorList>
    </citation>
    <scope>NUCLEOTIDE SEQUENCE [LARGE SCALE GENOMIC DNA]</scope>
    <source>
        <strain>CFT073 / ATCC 700928 / UPEC</strain>
    </source>
</reference>
<proteinExistence type="inferred from homology"/>
<evidence type="ECO:0000250" key="1">
    <source>
        <dbReference type="UniProtKB" id="Q9ZFV4"/>
    </source>
</evidence>
<evidence type="ECO:0000305" key="2"/>
<name>EUTT_ECOL6</name>
<feature type="chain" id="PRO_0000087099" description="Corrinoid adenosyltransferase EutT">
    <location>
        <begin position="1"/>
        <end position="267"/>
    </location>
</feature>
<feature type="binding site" evidence="1">
    <location>
        <position position="80"/>
    </location>
    <ligand>
        <name>a divalent metal cation</name>
        <dbReference type="ChEBI" id="CHEBI:60240"/>
        <note>ligand shared between homodimeric partners</note>
    </ligand>
</feature>
<feature type="binding site" evidence="1">
    <location>
        <position position="83"/>
    </location>
    <ligand>
        <name>a divalent metal cation</name>
        <dbReference type="ChEBI" id="CHEBI:60240"/>
        <note>ligand shared between homodimeric partners</note>
    </ligand>
</feature>
<keyword id="KW-0067">ATP-binding</keyword>
<keyword id="KW-1283">Bacterial microcompartment</keyword>
<keyword id="KW-0479">Metal-binding</keyword>
<keyword id="KW-0547">Nucleotide-binding</keyword>
<keyword id="KW-1185">Reference proteome</keyword>
<keyword id="KW-0808">Transferase</keyword>
<accession>P65644</accession>
<accession>P76554</accession>
<dbReference type="EC" id="2.5.1.154" evidence="1"/>
<dbReference type="EMBL" id="AE014075">
    <property type="protein sequence ID" value="AAN81434.1"/>
    <property type="molecule type" value="Genomic_DNA"/>
</dbReference>
<dbReference type="RefSeq" id="WP_000651298.1">
    <property type="nucleotide sequence ID" value="NZ_CP051263.1"/>
</dbReference>
<dbReference type="SMR" id="P65644"/>
<dbReference type="STRING" id="199310.c2984"/>
<dbReference type="GeneID" id="75204269"/>
<dbReference type="KEGG" id="ecc:c2984"/>
<dbReference type="eggNOG" id="COG4812">
    <property type="taxonomic scope" value="Bacteria"/>
</dbReference>
<dbReference type="HOGENOM" id="CLU_093470_1_0_6"/>
<dbReference type="BioCyc" id="ECOL199310:C2984-MONOMER"/>
<dbReference type="UniPathway" id="UPA00560"/>
<dbReference type="Proteomes" id="UP000001410">
    <property type="component" value="Chromosome"/>
</dbReference>
<dbReference type="GO" id="GO:0031469">
    <property type="term" value="C:bacterial microcompartment"/>
    <property type="evidence" value="ECO:0007669"/>
    <property type="project" value="UniProtKB-SubCell"/>
</dbReference>
<dbReference type="GO" id="GO:0005524">
    <property type="term" value="F:ATP binding"/>
    <property type="evidence" value="ECO:0007669"/>
    <property type="project" value="UniProtKB-KW"/>
</dbReference>
<dbReference type="GO" id="GO:0008817">
    <property type="term" value="F:corrinoid adenosyltransferase activity"/>
    <property type="evidence" value="ECO:0007669"/>
    <property type="project" value="InterPro"/>
</dbReference>
<dbReference type="GO" id="GO:0046872">
    <property type="term" value="F:metal ion binding"/>
    <property type="evidence" value="ECO:0007669"/>
    <property type="project" value="UniProtKB-KW"/>
</dbReference>
<dbReference type="GO" id="GO:0009236">
    <property type="term" value="P:cobalamin biosynthetic process"/>
    <property type="evidence" value="ECO:0007669"/>
    <property type="project" value="InterPro"/>
</dbReference>
<dbReference type="GO" id="GO:0046336">
    <property type="term" value="P:ethanolamine catabolic process"/>
    <property type="evidence" value="ECO:0007669"/>
    <property type="project" value="UniProtKB-UniPathway"/>
</dbReference>
<dbReference type="Gene3D" id="1.20.1200.10">
    <property type="entry name" value="Cobalamin adenosyltransferase-like"/>
    <property type="match status" value="1"/>
</dbReference>
<dbReference type="InterPro" id="IPR009194">
    <property type="entry name" value="AdoTrfase_EutT"/>
</dbReference>
<dbReference type="InterPro" id="IPR016030">
    <property type="entry name" value="CblAdoTrfase-like"/>
</dbReference>
<dbReference type="InterPro" id="IPR036451">
    <property type="entry name" value="CblAdoTrfase-like_sf"/>
</dbReference>
<dbReference type="NCBIfam" id="NF011595">
    <property type="entry name" value="PRK15020.1"/>
    <property type="match status" value="1"/>
</dbReference>
<dbReference type="Pfam" id="PF01923">
    <property type="entry name" value="Cob_adeno_trans"/>
    <property type="match status" value="1"/>
</dbReference>
<dbReference type="PIRSF" id="PIRSF012294">
    <property type="entry name" value="ATR_EutT"/>
    <property type="match status" value="1"/>
</dbReference>
<dbReference type="SUPFAM" id="SSF89028">
    <property type="entry name" value="Cobalamin adenosyltransferase-like"/>
    <property type="match status" value="1"/>
</dbReference>
<sequence length="267" mass="30172">MKDFITEAWLRANHTLSEGAEIHLPADSRLTPSARELLESRHLRIKFIDEQGRLFVDDEQQQPQPVHGLTSSDEHPQACCELCRQPVAKKPDTLTHLSAEKMVAKSDPRLGFRAVLDSTIALAVWLQIELAEPWQPWLADIRSRLGNIMRADALGEPLGCQAIVGLSDEDLHRLSHQPLRYLDHDHLVPEASHGRDAALLNLLRTKVRETETVAAQVFITRSFEVLRPDILQALNRLSSTVYVMMILSVTKQPLTVKQIQQRLGETQ</sequence>
<protein>
    <recommendedName>
        <fullName evidence="2">Corrinoid adenosyltransferase EutT</fullName>
        <ecNumber evidence="1">2.5.1.154</ecNumber>
    </recommendedName>
    <alternativeName>
        <fullName>ATP:co(I)rrinoid adenosyltransferase</fullName>
        <shortName>ACAT</shortName>
    </alternativeName>
    <alternativeName>
        <fullName>Cob(II)alamin adenosyltransferase EutT</fullName>
    </alternativeName>
    <alternativeName>
        <fullName>Ethanolamine utilization cobalamin adenosyltransferase</fullName>
    </alternativeName>
    <alternativeName>
        <fullName>Ethanolamine utilization corrinoid adenosyltransferase</fullName>
    </alternativeName>
    <alternativeName>
        <fullName evidence="1">EutT adenosyltransferase</fullName>
    </alternativeName>
</protein>
<gene>
    <name type="primary">eutT</name>
    <name type="ordered locus">c2984</name>
</gene>
<organism>
    <name type="scientific">Escherichia coli O6:H1 (strain CFT073 / ATCC 700928 / UPEC)</name>
    <dbReference type="NCBI Taxonomy" id="199310"/>
    <lineage>
        <taxon>Bacteria</taxon>
        <taxon>Pseudomonadati</taxon>
        <taxon>Pseudomonadota</taxon>
        <taxon>Gammaproteobacteria</taxon>
        <taxon>Enterobacterales</taxon>
        <taxon>Enterobacteriaceae</taxon>
        <taxon>Escherichia</taxon>
    </lineage>
</organism>